<name>TYPH_SALNS</name>
<evidence type="ECO:0000255" key="1">
    <source>
        <dbReference type="HAMAP-Rule" id="MF_01628"/>
    </source>
</evidence>
<dbReference type="EC" id="2.4.2.4" evidence="1"/>
<dbReference type="EMBL" id="CP001113">
    <property type="protein sequence ID" value="ACF62837.1"/>
    <property type="molecule type" value="Genomic_DNA"/>
</dbReference>
<dbReference type="RefSeq" id="WP_000477838.1">
    <property type="nucleotide sequence ID" value="NZ_CCMR01000003.1"/>
</dbReference>
<dbReference type="SMR" id="B4T4H1"/>
<dbReference type="KEGG" id="see:SNSL254_A4924"/>
<dbReference type="HOGENOM" id="CLU_025040_0_1_6"/>
<dbReference type="UniPathway" id="UPA00578">
    <property type="reaction ID" value="UER00638"/>
</dbReference>
<dbReference type="Proteomes" id="UP000008824">
    <property type="component" value="Chromosome"/>
</dbReference>
<dbReference type="GO" id="GO:0005829">
    <property type="term" value="C:cytosol"/>
    <property type="evidence" value="ECO:0007669"/>
    <property type="project" value="TreeGrafter"/>
</dbReference>
<dbReference type="GO" id="GO:0004645">
    <property type="term" value="F:1,4-alpha-oligoglucan phosphorylase activity"/>
    <property type="evidence" value="ECO:0007669"/>
    <property type="project" value="InterPro"/>
</dbReference>
<dbReference type="GO" id="GO:0009032">
    <property type="term" value="F:thymidine phosphorylase activity"/>
    <property type="evidence" value="ECO:0007669"/>
    <property type="project" value="UniProtKB-UniRule"/>
</dbReference>
<dbReference type="GO" id="GO:0006206">
    <property type="term" value="P:pyrimidine nucleobase metabolic process"/>
    <property type="evidence" value="ECO:0007669"/>
    <property type="project" value="InterPro"/>
</dbReference>
<dbReference type="GO" id="GO:0046104">
    <property type="term" value="P:thymidine metabolic process"/>
    <property type="evidence" value="ECO:0007669"/>
    <property type="project" value="UniProtKB-UniRule"/>
</dbReference>
<dbReference type="FunFam" id="3.40.1030.10:FF:000001">
    <property type="entry name" value="Thymidine phosphorylase"/>
    <property type="match status" value="1"/>
</dbReference>
<dbReference type="FunFam" id="3.90.1170.30:FF:000001">
    <property type="entry name" value="Thymidine phosphorylase"/>
    <property type="match status" value="1"/>
</dbReference>
<dbReference type="Gene3D" id="3.40.1030.10">
    <property type="entry name" value="Nucleoside phosphorylase/phosphoribosyltransferase catalytic domain"/>
    <property type="match status" value="1"/>
</dbReference>
<dbReference type="Gene3D" id="3.90.1170.30">
    <property type="entry name" value="Pyrimidine nucleoside phosphorylase-like, C-terminal domain"/>
    <property type="match status" value="1"/>
</dbReference>
<dbReference type="Gene3D" id="1.20.970.10">
    <property type="entry name" value="Transferase, Pyrimidine Nucleoside Phosphorylase, Chain C"/>
    <property type="match status" value="1"/>
</dbReference>
<dbReference type="HAMAP" id="MF_01628">
    <property type="entry name" value="Thymid_phosp"/>
    <property type="match status" value="1"/>
</dbReference>
<dbReference type="InterPro" id="IPR000312">
    <property type="entry name" value="Glycosyl_Trfase_fam3"/>
</dbReference>
<dbReference type="InterPro" id="IPR017459">
    <property type="entry name" value="Glycosyl_Trfase_fam3_N_dom"/>
</dbReference>
<dbReference type="InterPro" id="IPR036320">
    <property type="entry name" value="Glycosyl_Trfase_fam3_N_dom_sf"/>
</dbReference>
<dbReference type="InterPro" id="IPR035902">
    <property type="entry name" value="Nuc_phospho_transferase"/>
</dbReference>
<dbReference type="InterPro" id="IPR036566">
    <property type="entry name" value="PYNP-like_C_sf"/>
</dbReference>
<dbReference type="InterPro" id="IPR013102">
    <property type="entry name" value="PYNP_C"/>
</dbReference>
<dbReference type="InterPro" id="IPR018090">
    <property type="entry name" value="Pyrmidine_PPas_bac/euk"/>
</dbReference>
<dbReference type="InterPro" id="IPR017872">
    <property type="entry name" value="Pyrmidine_PPase_CS"/>
</dbReference>
<dbReference type="InterPro" id="IPR000053">
    <property type="entry name" value="Thymidine/pyrmidine_PPase"/>
</dbReference>
<dbReference type="InterPro" id="IPR013465">
    <property type="entry name" value="Thymidine_Pase"/>
</dbReference>
<dbReference type="NCBIfam" id="NF004490">
    <property type="entry name" value="PRK05820.1"/>
    <property type="match status" value="1"/>
</dbReference>
<dbReference type="NCBIfam" id="TIGR02643">
    <property type="entry name" value="T_phosphoryl"/>
    <property type="match status" value="1"/>
</dbReference>
<dbReference type="NCBIfam" id="TIGR02644">
    <property type="entry name" value="Y_phosphoryl"/>
    <property type="match status" value="1"/>
</dbReference>
<dbReference type="PANTHER" id="PTHR10515">
    <property type="entry name" value="THYMIDINE PHOSPHORYLASE"/>
    <property type="match status" value="1"/>
</dbReference>
<dbReference type="PANTHER" id="PTHR10515:SF0">
    <property type="entry name" value="THYMIDINE PHOSPHORYLASE"/>
    <property type="match status" value="1"/>
</dbReference>
<dbReference type="Pfam" id="PF02885">
    <property type="entry name" value="Glycos_trans_3N"/>
    <property type="match status" value="1"/>
</dbReference>
<dbReference type="Pfam" id="PF00591">
    <property type="entry name" value="Glycos_transf_3"/>
    <property type="match status" value="1"/>
</dbReference>
<dbReference type="Pfam" id="PF07831">
    <property type="entry name" value="PYNP_C"/>
    <property type="match status" value="1"/>
</dbReference>
<dbReference type="PIRSF" id="PIRSF000478">
    <property type="entry name" value="TP_PyNP"/>
    <property type="match status" value="1"/>
</dbReference>
<dbReference type="SMART" id="SM00941">
    <property type="entry name" value="PYNP_C"/>
    <property type="match status" value="1"/>
</dbReference>
<dbReference type="SUPFAM" id="SSF52418">
    <property type="entry name" value="Nucleoside phosphorylase/phosphoribosyltransferase catalytic domain"/>
    <property type="match status" value="1"/>
</dbReference>
<dbReference type="SUPFAM" id="SSF47648">
    <property type="entry name" value="Nucleoside phosphorylase/phosphoribosyltransferase N-terminal domain"/>
    <property type="match status" value="1"/>
</dbReference>
<dbReference type="SUPFAM" id="SSF54680">
    <property type="entry name" value="Pyrimidine nucleoside phosphorylase C-terminal domain"/>
    <property type="match status" value="1"/>
</dbReference>
<dbReference type="PROSITE" id="PS00647">
    <property type="entry name" value="THYMID_PHOSPHORYLASE"/>
    <property type="match status" value="1"/>
</dbReference>
<proteinExistence type="inferred from homology"/>
<feature type="chain" id="PRO_1000186270" description="Thymidine phosphorylase">
    <location>
        <begin position="1"/>
        <end position="440"/>
    </location>
</feature>
<organism>
    <name type="scientific">Salmonella newport (strain SL254)</name>
    <dbReference type="NCBI Taxonomy" id="423368"/>
    <lineage>
        <taxon>Bacteria</taxon>
        <taxon>Pseudomonadati</taxon>
        <taxon>Pseudomonadota</taxon>
        <taxon>Gammaproteobacteria</taxon>
        <taxon>Enterobacterales</taxon>
        <taxon>Enterobacteriaceae</taxon>
        <taxon>Salmonella</taxon>
    </lineage>
</organism>
<reference key="1">
    <citation type="journal article" date="2011" name="J. Bacteriol.">
        <title>Comparative genomics of 28 Salmonella enterica isolates: evidence for CRISPR-mediated adaptive sublineage evolution.</title>
        <authorList>
            <person name="Fricke W.F."/>
            <person name="Mammel M.K."/>
            <person name="McDermott P.F."/>
            <person name="Tartera C."/>
            <person name="White D.G."/>
            <person name="Leclerc J.E."/>
            <person name="Ravel J."/>
            <person name="Cebula T.A."/>
        </authorList>
    </citation>
    <scope>NUCLEOTIDE SEQUENCE [LARGE SCALE GENOMIC DNA]</scope>
    <source>
        <strain>SL254</strain>
    </source>
</reference>
<accession>B4T4H1</accession>
<sequence>MFLAQEIIRKKRDGHALSDEEIRFFINGIRDNTISEGQIAALAMTIFFHDMTMPERVSLTMAMRDSGTVLDWKSLNLNGPIVDKHSTGGVGDVTSLMLGPMVAACGGYVPMISGRGLGHTGGTLDKLEAIPGFDIFPDDNRFREIIQDVGVAIIGQTSSLAPADKRFYATRDITATVDSIPLITGSILAKKLAEGLDALVMDVKVGSGAFMPTYELSEALAEAIVGVANGAGVRTTALLTDMNQVLASSAGNAVEVREAVQFLTGEYRNPRLFDVTMALCVEMLISGQLAKDDAEARAKLQAVLDNGKAAEVFGRMVAAQKGPSDFVENYDKYLPTAMLSKAVYADTEGFISAMDTRALGMAVVSMGGGRRQASDTIDYSVGFTDMARLGDSIDGQRPLAVIHAKDEASWQEAAKAVKAAIILDDKAPASTPSVYRRITE</sequence>
<keyword id="KW-0328">Glycosyltransferase</keyword>
<keyword id="KW-0808">Transferase</keyword>
<comment type="function">
    <text evidence="1">The enzymes which catalyze the reversible phosphorolysis of pyrimidine nucleosides are involved in the degradation of these compounds and in their utilization as carbon and energy sources, or in the rescue of pyrimidine bases for nucleotide synthesis.</text>
</comment>
<comment type="catalytic activity">
    <reaction evidence="1">
        <text>thymidine + phosphate = 2-deoxy-alpha-D-ribose 1-phosphate + thymine</text>
        <dbReference type="Rhea" id="RHEA:16037"/>
        <dbReference type="ChEBI" id="CHEBI:17748"/>
        <dbReference type="ChEBI" id="CHEBI:17821"/>
        <dbReference type="ChEBI" id="CHEBI:43474"/>
        <dbReference type="ChEBI" id="CHEBI:57259"/>
        <dbReference type="EC" id="2.4.2.4"/>
    </reaction>
</comment>
<comment type="pathway">
    <text evidence="1">Pyrimidine metabolism; dTMP biosynthesis via salvage pathway; dTMP from thymine: step 1/2.</text>
</comment>
<comment type="subunit">
    <text evidence="1">Homodimer.</text>
</comment>
<comment type="similarity">
    <text evidence="1">Belongs to the thymidine/pyrimidine-nucleoside phosphorylase family.</text>
</comment>
<protein>
    <recommendedName>
        <fullName evidence="1">Thymidine phosphorylase</fullName>
        <ecNumber evidence="1">2.4.2.4</ecNumber>
    </recommendedName>
    <alternativeName>
        <fullName evidence="1">TdRPase</fullName>
    </alternativeName>
</protein>
<gene>
    <name evidence="1" type="primary">deoA</name>
    <name type="ordered locus">SNSL254_A4924</name>
</gene>